<sequence>MGHHRPWLHASVLWAGVASLLLPPAMTQQLRGDGLGFRNRNNSTGVAGLSEEASAELRHHLHSPRDHPDENKDVSTENGHHFWSHPDREKEDEDVSKEYGHLLPGHRSQDHKVGDEGVSGEEVFAEHGGQARGHRGHGSEDTEDSAEHRHHLPSHRSHSHQDEDEDEVVSSEHHHHILRHGHRGHDGEDDEGEEEEEEEEEEEEASTEYGHQAHRHRGHGSEEDEDVSDGHHHHGPSHRHQGHEEDDDDDDDDDDDDDDDDVSIEYRHQAHRHQGHGIEEDEDVSDGHHHRDPSHRHRSHEEDDNDDDDVSTEYGHQAHRHQDHRKEEVEAVSGEHHHHVPDHRHQGHRDEEEDEDVSTERWHQGPQHVHHGLVDEEEEEEEITVQFGHYVASHQPRGHKSDEEDFQDEYKTEVPHHHHHRVPREEDEEVSAELGHQAPSHRQSHQDEETGHGQRGSIKEMSHHPPGHTVVKDRSHLRKDDSEEEKEKEEDPGSHEEDDESSEQGEKGTHHGSRDQEDEEDEEEGHGLSLNQEEEEEEDKEEEEEEEDEERREERAEVGAPLSPDHSEEEEEEEEGLEEDEPRFTIIPNPLDRREEAGGASSEEESGEDTGPQDAQEYGNYQPGSLCGYCSFCNRCTECESCHCDEENMGEHCDQCQHCQFCYLCPLVCETVCAPGSYVDYFSSSLYQALADMLETPEP</sequence>
<feature type="signal peptide">
    <location>
        <begin position="1"/>
        <end position="28"/>
    </location>
</feature>
<feature type="chain" id="PRO_0000022414" description="Sarcoplasmic reticulum histidine-rich calcium-binding protein">
    <location>
        <begin position="29"/>
        <end position="699"/>
    </location>
</feature>
<feature type="repeat" description="2-1">
    <location>
        <begin position="106"/>
        <end position="121"/>
    </location>
</feature>
<feature type="repeat" description="2-2">
    <location>
        <begin position="134"/>
        <end position="154"/>
    </location>
</feature>
<feature type="repeat" description="2-3">
    <location>
        <begin position="155"/>
        <end position="177"/>
    </location>
</feature>
<feature type="repeat" description="1-1">
    <location>
        <begin position="180"/>
        <end position="213"/>
    </location>
</feature>
<feature type="repeat" description="2-4">
    <location>
        <begin position="214"/>
        <end position="237"/>
    </location>
</feature>
<feature type="repeat" description="1-2">
    <location>
        <begin position="238"/>
        <end position="270"/>
    </location>
</feature>
<feature type="repeat" description="2-5">
    <location>
        <begin position="271"/>
        <end position="294"/>
    </location>
</feature>
<feature type="repeat" description="1-3">
    <location>
        <begin position="295"/>
        <end position="318"/>
    </location>
</feature>
<feature type="repeat" description="2-6">
    <location>
        <begin position="319"/>
        <end position="342"/>
    </location>
</feature>
<feature type="repeat" description="1-4">
    <location>
        <begin position="343"/>
        <end position="365"/>
    </location>
</feature>
<feature type="region of interest" description="Disordered" evidence="2">
    <location>
        <begin position="50"/>
        <end position="95"/>
    </location>
</feature>
<feature type="region of interest" description="4 X tandem repeats, acidic">
    <location>
        <begin position="106"/>
        <end position="365"/>
    </location>
</feature>
<feature type="region of interest" description="6 X approximate tandem repeats">
    <location>
        <begin position="106"/>
        <end position="342"/>
    </location>
</feature>
<feature type="region of interest" description="Disordered" evidence="2">
    <location>
        <begin position="127"/>
        <end position="617"/>
    </location>
</feature>
<feature type="region of interest" description="Metal-binding" evidence="1">
    <location>
        <begin position="627"/>
        <end position="673"/>
    </location>
</feature>
<feature type="compositionally biased region" description="Basic and acidic residues" evidence="2">
    <location>
        <begin position="55"/>
        <end position="89"/>
    </location>
</feature>
<feature type="compositionally biased region" description="Basic residues" evidence="2">
    <location>
        <begin position="148"/>
        <end position="158"/>
    </location>
</feature>
<feature type="compositionally biased region" description="Basic residues" evidence="2">
    <location>
        <begin position="173"/>
        <end position="183"/>
    </location>
</feature>
<feature type="compositionally biased region" description="Acidic residues" evidence="2">
    <location>
        <begin position="187"/>
        <end position="206"/>
    </location>
</feature>
<feature type="compositionally biased region" description="Basic residues" evidence="2">
    <location>
        <begin position="231"/>
        <end position="241"/>
    </location>
</feature>
<feature type="compositionally biased region" description="Acidic residues" evidence="2">
    <location>
        <begin position="244"/>
        <end position="263"/>
    </location>
</feature>
<feature type="compositionally biased region" description="Basic residues" evidence="2">
    <location>
        <begin position="288"/>
        <end position="298"/>
    </location>
</feature>
<feature type="compositionally biased region" description="Acidic residues" evidence="2">
    <location>
        <begin position="302"/>
        <end position="311"/>
    </location>
</feature>
<feature type="compositionally biased region" description="Basic and acidic residues" evidence="2">
    <location>
        <begin position="324"/>
        <end position="335"/>
    </location>
</feature>
<feature type="compositionally biased region" description="Basic residues" evidence="2">
    <location>
        <begin position="336"/>
        <end position="347"/>
    </location>
</feature>
<feature type="compositionally biased region" description="Basic and acidic residues" evidence="2">
    <location>
        <begin position="444"/>
        <end position="463"/>
    </location>
</feature>
<feature type="compositionally biased region" description="Basic and acidic residues" evidence="2">
    <location>
        <begin position="470"/>
        <end position="481"/>
    </location>
</feature>
<feature type="compositionally biased region" description="Basic and acidic residues" evidence="2">
    <location>
        <begin position="504"/>
        <end position="515"/>
    </location>
</feature>
<feature type="compositionally biased region" description="Acidic residues" evidence="2">
    <location>
        <begin position="532"/>
        <end position="551"/>
    </location>
</feature>
<feature type="compositionally biased region" description="Acidic residues" evidence="2">
    <location>
        <begin position="567"/>
        <end position="581"/>
    </location>
</feature>
<feature type="modified residue" description="Phosphothreonine; by FAM20C" evidence="3">
    <location>
        <position position="76"/>
    </location>
</feature>
<feature type="modified residue" description="Phosphoserine; by FAM20C" evidence="3">
    <location>
        <position position="119"/>
    </location>
</feature>
<feature type="modified residue" description="Phosphoserine; by FAM20C" evidence="3">
    <location>
        <position position="145"/>
    </location>
</feature>
<feature type="modified residue" description="Phosphoserine" evidence="5">
    <location>
        <position position="333"/>
    </location>
</feature>
<feature type="modified residue" description="Phosphoserine; by FAM20C" evidence="3">
    <location>
        <position position="358"/>
    </location>
</feature>
<feature type="modified residue" description="Phosphoserine; by FAM20C" evidence="3">
    <location>
        <position position="431"/>
    </location>
</feature>
<feature type="modified residue" description="Phosphoserine; by FAM20C" evidence="3">
    <location>
        <position position="494"/>
    </location>
</feature>
<feature type="modified residue" description="Phosphoserine; by FAM20C" evidence="3">
    <location>
        <position position="567"/>
    </location>
</feature>
<feature type="sequence variant" id="VAR_021931" description="In dbSNP:rs3745298.">
    <original>S</original>
    <variation>N</variation>
    <location>
        <position position="43"/>
    </location>
</feature>
<feature type="sequence variant" id="VAR_005623" description="In dbSNP:rs3745297.">
    <original>S</original>
    <variation>A</variation>
    <location>
        <position position="96"/>
    </location>
</feature>
<feature type="sequence variant" id="VAR_011622">
    <location>
        <position position="204"/>
    </location>
</feature>
<accession>P23327</accession>
<accession>Q504Y6</accession>
<protein>
    <recommendedName>
        <fullName>Sarcoplasmic reticulum histidine-rich calcium-binding protein</fullName>
    </recommendedName>
</protein>
<dbReference type="EMBL" id="M60052">
    <property type="protein sequence ID" value="AAA88071.1"/>
    <property type="molecule type" value="mRNA"/>
</dbReference>
<dbReference type="EMBL" id="BC069795">
    <property type="protein sequence ID" value="AAH69795.1"/>
    <property type="molecule type" value="mRNA"/>
</dbReference>
<dbReference type="EMBL" id="BC069802">
    <property type="protein sequence ID" value="AAH69802.1"/>
    <property type="molecule type" value="mRNA"/>
</dbReference>
<dbReference type="EMBL" id="BC094691">
    <property type="protein sequence ID" value="AAH94691.1"/>
    <property type="molecule type" value="mRNA"/>
</dbReference>
<dbReference type="CCDS" id="CCDS12759.1"/>
<dbReference type="PIR" id="A54660">
    <property type="entry name" value="A54660"/>
</dbReference>
<dbReference type="RefSeq" id="NP_002143.1">
    <property type="nucleotide sequence ID" value="NM_002152.3"/>
</dbReference>
<dbReference type="SMR" id="P23327"/>
<dbReference type="BioGRID" id="109506">
    <property type="interactions" value="10"/>
</dbReference>
<dbReference type="FunCoup" id="P23327">
    <property type="interactions" value="317"/>
</dbReference>
<dbReference type="IntAct" id="P23327">
    <property type="interactions" value="9"/>
</dbReference>
<dbReference type="STRING" id="9606.ENSP00000252825"/>
<dbReference type="GlyCosmos" id="P23327">
    <property type="glycosylation" value="1 site, 1 glycan"/>
</dbReference>
<dbReference type="GlyGen" id="P23327">
    <property type="glycosylation" value="3 sites, 3 N-linked glycans (1 site), 2 O-linked glycans (2 sites)"/>
</dbReference>
<dbReference type="iPTMnet" id="P23327"/>
<dbReference type="PhosphoSitePlus" id="P23327"/>
<dbReference type="SwissPalm" id="P23327"/>
<dbReference type="BioMuta" id="HRC"/>
<dbReference type="DMDM" id="134873"/>
<dbReference type="jPOST" id="P23327"/>
<dbReference type="MassIVE" id="P23327"/>
<dbReference type="PaxDb" id="9606-ENSP00000252825"/>
<dbReference type="PeptideAtlas" id="P23327"/>
<dbReference type="ProteomicsDB" id="54080"/>
<dbReference type="Pumba" id="P23327"/>
<dbReference type="Antibodypedia" id="1379">
    <property type="antibodies" value="80 antibodies from 18 providers"/>
</dbReference>
<dbReference type="DNASU" id="3270"/>
<dbReference type="Ensembl" id="ENST00000252825.9">
    <property type="protein sequence ID" value="ENSP00000252825.3"/>
    <property type="gene ID" value="ENSG00000130528.12"/>
</dbReference>
<dbReference type="GeneID" id="3270"/>
<dbReference type="KEGG" id="hsa:3270"/>
<dbReference type="MANE-Select" id="ENST00000252825.9">
    <property type="protein sequence ID" value="ENSP00000252825.3"/>
    <property type="RefSeq nucleotide sequence ID" value="NM_002152.3"/>
    <property type="RefSeq protein sequence ID" value="NP_002143.1"/>
</dbReference>
<dbReference type="UCSC" id="uc002pmv.4">
    <property type="organism name" value="human"/>
</dbReference>
<dbReference type="AGR" id="HGNC:5178"/>
<dbReference type="CTD" id="3270"/>
<dbReference type="DisGeNET" id="3270"/>
<dbReference type="GeneCards" id="HRC"/>
<dbReference type="HGNC" id="HGNC:5178">
    <property type="gene designation" value="HRC"/>
</dbReference>
<dbReference type="HPA" id="ENSG00000130528">
    <property type="expression patterns" value="Group enriched (heart muscle, skeletal muscle, tongue)"/>
</dbReference>
<dbReference type="MalaCards" id="HRC"/>
<dbReference type="MIM" id="142705">
    <property type="type" value="gene"/>
</dbReference>
<dbReference type="neXtProt" id="NX_P23327"/>
<dbReference type="OpenTargets" id="ENSG00000130528"/>
<dbReference type="PharmGKB" id="PA29452"/>
<dbReference type="VEuPathDB" id="HostDB:ENSG00000130528"/>
<dbReference type="eggNOG" id="ENOG502S3MW">
    <property type="taxonomic scope" value="Eukaryota"/>
</dbReference>
<dbReference type="GeneTree" id="ENSGT00730000111459"/>
<dbReference type="HOGENOM" id="CLU_023924_0_0_1"/>
<dbReference type="InParanoid" id="P23327"/>
<dbReference type="OMA" id="VSDEHPH"/>
<dbReference type="OrthoDB" id="9428907at2759"/>
<dbReference type="PAN-GO" id="P23327">
    <property type="GO annotations" value="0 GO annotations based on evolutionary models"/>
</dbReference>
<dbReference type="PhylomeDB" id="P23327"/>
<dbReference type="TreeFam" id="TF344276"/>
<dbReference type="PathwayCommons" id="P23327"/>
<dbReference type="Reactome" id="R-HSA-381426">
    <property type="pathway name" value="Regulation of Insulin-like Growth Factor (IGF) transport and uptake by Insulin-like Growth Factor Binding Proteins (IGFBPs)"/>
</dbReference>
<dbReference type="Reactome" id="R-HSA-8957275">
    <property type="pathway name" value="Post-translational protein phosphorylation"/>
</dbReference>
<dbReference type="SignaLink" id="P23327"/>
<dbReference type="SIGNOR" id="P23327"/>
<dbReference type="BioGRID-ORCS" id="3270">
    <property type="hits" value="12 hits in 1158 CRISPR screens"/>
</dbReference>
<dbReference type="ChiTaRS" id="HRC">
    <property type="organism name" value="human"/>
</dbReference>
<dbReference type="GeneWiki" id="HRC_(gene)"/>
<dbReference type="GenomeRNAi" id="3270"/>
<dbReference type="Pharos" id="P23327">
    <property type="development level" value="Tbio"/>
</dbReference>
<dbReference type="PRO" id="PR:P23327"/>
<dbReference type="Proteomes" id="UP000005640">
    <property type="component" value="Chromosome 19"/>
</dbReference>
<dbReference type="RNAct" id="P23327">
    <property type="molecule type" value="protein"/>
</dbReference>
<dbReference type="Bgee" id="ENSG00000130528">
    <property type="expression patterns" value="Expressed in apex of heart and 107 other cell types or tissues"/>
</dbReference>
<dbReference type="ExpressionAtlas" id="P23327">
    <property type="expression patterns" value="baseline and differential"/>
</dbReference>
<dbReference type="GO" id="GO:0005829">
    <property type="term" value="C:cytosol"/>
    <property type="evidence" value="ECO:0000314"/>
    <property type="project" value="HPA"/>
</dbReference>
<dbReference type="GO" id="GO:0005783">
    <property type="term" value="C:endoplasmic reticulum"/>
    <property type="evidence" value="ECO:0000314"/>
    <property type="project" value="HPA"/>
</dbReference>
<dbReference type="GO" id="GO:0005788">
    <property type="term" value="C:endoplasmic reticulum lumen"/>
    <property type="evidence" value="ECO:0000304"/>
    <property type="project" value="Reactome"/>
</dbReference>
<dbReference type="GO" id="GO:0005739">
    <property type="term" value="C:mitochondrion"/>
    <property type="evidence" value="ECO:0000314"/>
    <property type="project" value="HPA"/>
</dbReference>
<dbReference type="GO" id="GO:0033018">
    <property type="term" value="C:sarcoplasmic reticulum lumen"/>
    <property type="evidence" value="ECO:0000304"/>
    <property type="project" value="BHF-UCL"/>
</dbReference>
<dbReference type="GO" id="GO:0030018">
    <property type="term" value="C:Z disc"/>
    <property type="evidence" value="ECO:0000314"/>
    <property type="project" value="BHF-UCL"/>
</dbReference>
<dbReference type="GO" id="GO:0051117">
    <property type="term" value="F:ATPase binding"/>
    <property type="evidence" value="ECO:0000353"/>
    <property type="project" value="BHF-UCL"/>
</dbReference>
<dbReference type="GO" id="GO:0005509">
    <property type="term" value="F:calcium ion binding"/>
    <property type="evidence" value="ECO:0000314"/>
    <property type="project" value="BHF-UCL"/>
</dbReference>
<dbReference type="GO" id="GO:0044325">
    <property type="term" value="F:transmembrane transporter binding"/>
    <property type="evidence" value="ECO:0000353"/>
    <property type="project" value="BHF-UCL"/>
</dbReference>
<dbReference type="GO" id="GO:0006936">
    <property type="term" value="P:muscle contraction"/>
    <property type="evidence" value="ECO:0000304"/>
    <property type="project" value="ProtInc"/>
</dbReference>
<dbReference type="GO" id="GO:0045823">
    <property type="term" value="P:positive regulation of heart contraction"/>
    <property type="evidence" value="ECO:0000316"/>
    <property type="project" value="BHF-UCL"/>
</dbReference>
<dbReference type="GO" id="GO:0010460">
    <property type="term" value="P:positive regulation of heart rate"/>
    <property type="evidence" value="ECO:0000316"/>
    <property type="project" value="BHF-UCL"/>
</dbReference>
<dbReference type="GO" id="GO:1901899">
    <property type="term" value="P:positive regulation of relaxation of cardiac muscle"/>
    <property type="evidence" value="ECO:0000316"/>
    <property type="project" value="BHF-UCL"/>
</dbReference>
<dbReference type="GO" id="GO:1903169">
    <property type="term" value="P:regulation of calcium ion transmembrane transport"/>
    <property type="evidence" value="ECO:0000316"/>
    <property type="project" value="BHF-UCL"/>
</dbReference>
<dbReference type="GO" id="GO:0010881">
    <property type="term" value="P:regulation of cardiac muscle contraction by regulation of the release of sequestered calcium ion"/>
    <property type="evidence" value="ECO:0000304"/>
    <property type="project" value="BHF-UCL"/>
</dbReference>
<dbReference type="GO" id="GO:1901844">
    <property type="term" value="P:regulation of cell communication by electrical coupling involved in cardiac conduction"/>
    <property type="evidence" value="ECO:0000316"/>
    <property type="project" value="BHF-UCL"/>
</dbReference>
<dbReference type="GO" id="GO:0051480">
    <property type="term" value="P:regulation of cytosolic calcium ion concentration"/>
    <property type="evidence" value="ECO:0000316"/>
    <property type="project" value="BHF-UCL"/>
</dbReference>
<dbReference type="GO" id="GO:0002027">
    <property type="term" value="P:regulation of heart rate"/>
    <property type="evidence" value="ECO:0000315"/>
    <property type="project" value="BHF-UCL"/>
</dbReference>
<dbReference type="GO" id="GO:0010880">
    <property type="term" value="P:regulation of release of sequestered calcium ion into cytosol by sarcoplasmic reticulum"/>
    <property type="evidence" value="ECO:0000316"/>
    <property type="project" value="BHF-UCL"/>
</dbReference>
<dbReference type="InterPro" id="IPR019552">
    <property type="entry name" value="Hist_rich_Ca-bd"/>
</dbReference>
<dbReference type="InterPro" id="IPR015666">
    <property type="entry name" value="HRC"/>
</dbReference>
<dbReference type="PANTHER" id="PTHR15054">
    <property type="entry name" value="HISTIDINE-RICH CALCIUM-BINDING PROTEIN-RELATED"/>
    <property type="match status" value="1"/>
</dbReference>
<dbReference type="PANTHER" id="PTHR15054:SF3">
    <property type="entry name" value="SARCOPLASMIC RETICULUM HISTIDINE-RICH CALCIUM-BINDING PROTEIN"/>
    <property type="match status" value="1"/>
</dbReference>
<dbReference type="Pfam" id="PF10529">
    <property type="entry name" value="Hist_rich_Ca-bd"/>
    <property type="match status" value="6"/>
</dbReference>
<evidence type="ECO:0000255" key="1"/>
<evidence type="ECO:0000256" key="2">
    <source>
        <dbReference type="SAM" id="MobiDB-lite"/>
    </source>
</evidence>
<evidence type="ECO:0000269" key="3">
    <source>
    </source>
</evidence>
<evidence type="ECO:0000305" key="4"/>
<evidence type="ECO:0007744" key="5">
    <source>
    </source>
</evidence>
<comment type="function">
    <text>May play a role in the regulation of calcium sequestration or release in the SR of skeletal and cardiac muscle.</text>
</comment>
<comment type="interaction">
    <interactant intactId="EBI-9639760">
        <id>P23327</id>
    </interactant>
    <interactant intactId="EBI-702484">
        <id>P14923</id>
        <label>JUP</label>
    </interactant>
    <organismsDiffer>false</organismsDiffer>
    <experiments>2</experiments>
</comment>
<comment type="interaction">
    <interactant intactId="EBI-9639760">
        <id>P23327</id>
    </interactant>
    <interactant intactId="EBI-10217363">
        <id>Q32M78</id>
        <label>ZNF699</label>
    </interactant>
    <organismsDiffer>false</organismsDiffer>
    <experiments>3</experiments>
</comment>
<comment type="interaction">
    <interactant intactId="EBI-9639760">
        <id>P23327</id>
    </interactant>
    <interactant intactId="EBI-643628">
        <id>E9Q401</id>
        <label>Ryr2</label>
    </interactant>
    <organismsDiffer>true</organismsDiffer>
    <experiments>3</experiments>
</comment>
<comment type="subcellular location">
    <subcellularLocation>
        <location>Sarcoplasmic reticulum lumen</location>
    </subcellularLocation>
</comment>
<comment type="similarity">
    <text evidence="4">Belongs to the HRC family.</text>
</comment>
<proteinExistence type="evidence at protein level"/>
<keyword id="KW-0106">Calcium</keyword>
<keyword id="KW-0597">Phosphoprotein</keyword>
<keyword id="KW-1267">Proteomics identification</keyword>
<keyword id="KW-1185">Reference proteome</keyword>
<keyword id="KW-0677">Repeat</keyword>
<keyword id="KW-0703">Sarcoplasmic reticulum</keyword>
<keyword id="KW-0732">Signal</keyword>
<reference key="1">
    <citation type="journal article" date="1991" name="Genomics">
        <title>cDNA and genomic cloning of HRC, a human sarcoplasmic reticulum protein, and localization of the gene to human chromosome 19 and mouse chromosome 7.</title>
        <authorList>
            <person name="Hofmann S.L."/>
            <person name="Topham M."/>
            <person name="Hsieh C.-L."/>
            <person name="Francke U."/>
        </authorList>
    </citation>
    <scope>NUCLEOTIDE SEQUENCE [MRNA]</scope>
    <scope>VARIANTS</scope>
    <source>
        <tissue>Skeletal muscle</tissue>
    </source>
</reference>
<reference key="2">
    <citation type="journal article" date="2004" name="Genome Res.">
        <title>The status, quality, and expansion of the NIH full-length cDNA project: the Mammalian Gene Collection (MGC).</title>
        <authorList>
            <consortium name="The MGC Project Team"/>
        </authorList>
    </citation>
    <scope>NUCLEOTIDE SEQUENCE [LARGE SCALE MRNA]</scope>
    <source>
        <tissue>Skeletal muscle</tissue>
    </source>
</reference>
<reference key="3">
    <citation type="journal article" date="2013" name="J. Proteome Res.">
        <title>Toward a comprehensive characterization of a human cancer cell phosphoproteome.</title>
        <authorList>
            <person name="Zhou H."/>
            <person name="Di Palma S."/>
            <person name="Preisinger C."/>
            <person name="Peng M."/>
            <person name="Polat A.N."/>
            <person name="Heck A.J."/>
            <person name="Mohammed S."/>
        </authorList>
    </citation>
    <scope>IDENTIFICATION BY MASS SPECTROMETRY [LARGE SCALE ANALYSIS]</scope>
    <source>
        <tissue>Erythroleukemia</tissue>
    </source>
</reference>
<reference key="4">
    <citation type="journal article" date="2014" name="J. Proteomics">
        <title>An enzyme assisted RP-RPLC approach for in-depth analysis of human liver phosphoproteome.</title>
        <authorList>
            <person name="Bian Y."/>
            <person name="Song C."/>
            <person name="Cheng K."/>
            <person name="Dong M."/>
            <person name="Wang F."/>
            <person name="Huang J."/>
            <person name="Sun D."/>
            <person name="Wang L."/>
            <person name="Ye M."/>
            <person name="Zou H."/>
        </authorList>
    </citation>
    <scope>PHOSPHORYLATION [LARGE SCALE ANALYSIS] AT SER-333</scope>
    <scope>IDENTIFICATION BY MASS SPECTROMETRY [LARGE SCALE ANALYSIS]</scope>
    <source>
        <tissue>Liver</tissue>
    </source>
</reference>
<reference key="5">
    <citation type="journal article" date="2015" name="Cell">
        <title>A single kinase generates the majority of the secreted phosphoproteome.</title>
        <authorList>
            <person name="Tagliabracci V.S."/>
            <person name="Wiley S.E."/>
            <person name="Guo X."/>
            <person name="Kinch L.N."/>
            <person name="Durrant E."/>
            <person name="Wen J."/>
            <person name="Xiao J."/>
            <person name="Cui J."/>
            <person name="Nguyen K.B."/>
            <person name="Engel J.L."/>
            <person name="Coon J.J."/>
            <person name="Grishin N."/>
            <person name="Pinna L.A."/>
            <person name="Pagliarini D.J."/>
            <person name="Dixon J.E."/>
        </authorList>
    </citation>
    <scope>PHOSPHORYLATION AT THR-76; SER-119; SER-145; SER-358; SER-431; SER-494 AND SER-567</scope>
</reference>
<gene>
    <name type="primary">HRC</name>
    <name type="synonym">HCP</name>
</gene>
<name>SRCH_HUMAN</name>
<organism>
    <name type="scientific">Homo sapiens</name>
    <name type="common">Human</name>
    <dbReference type="NCBI Taxonomy" id="9606"/>
    <lineage>
        <taxon>Eukaryota</taxon>
        <taxon>Metazoa</taxon>
        <taxon>Chordata</taxon>
        <taxon>Craniata</taxon>
        <taxon>Vertebrata</taxon>
        <taxon>Euteleostomi</taxon>
        <taxon>Mammalia</taxon>
        <taxon>Eutheria</taxon>
        <taxon>Euarchontoglires</taxon>
        <taxon>Primates</taxon>
        <taxon>Haplorrhini</taxon>
        <taxon>Catarrhini</taxon>
        <taxon>Hominidae</taxon>
        <taxon>Homo</taxon>
    </lineage>
</organism>